<proteinExistence type="inferred from homology"/>
<accession>A4VTH2</accession>
<sequence>MKLPKEGDFITIQSYKHDGEIHRTWRDTMVLKTTENAIIGVNNHTLVTENDGRRWVTREPAIVYFHKKYWFNIIAMIRENGVSYYCNLASPYVLDNEALKYIDYDLDVKVFADGEKRLLDVDEYERHRKAMKYSDDIDFILKENVKILVDWINNQRGPFSPAYVNIWYKRYLELRSR</sequence>
<keyword id="KW-0378">Hydrolase</keyword>
<keyword id="KW-0460">Magnesium</keyword>
<keyword id="KW-0479">Metal-binding</keyword>
<organism>
    <name type="scientific">Streptococcus suis (strain 05ZYH33)</name>
    <dbReference type="NCBI Taxonomy" id="391295"/>
    <lineage>
        <taxon>Bacteria</taxon>
        <taxon>Bacillati</taxon>
        <taxon>Bacillota</taxon>
        <taxon>Bacilli</taxon>
        <taxon>Lactobacillales</taxon>
        <taxon>Streptococcaceae</taxon>
        <taxon>Streptococcus</taxon>
    </lineage>
</organism>
<name>NTDP_STRSY</name>
<gene>
    <name type="ordered locus">SSU05_0445</name>
</gene>
<dbReference type="EC" id="3.6.1.15" evidence="1"/>
<dbReference type="EC" id="3.6.1.6" evidence="1"/>
<dbReference type="EMBL" id="CP000407">
    <property type="protein sequence ID" value="ABP89411.1"/>
    <property type="molecule type" value="Genomic_DNA"/>
</dbReference>
<dbReference type="SMR" id="A4VTH2"/>
<dbReference type="STRING" id="391295.SSU05_0445"/>
<dbReference type="KEGG" id="ssu:SSU05_0445"/>
<dbReference type="eggNOG" id="COG3557">
    <property type="taxonomic scope" value="Bacteria"/>
</dbReference>
<dbReference type="HOGENOM" id="CLU_109787_1_0_9"/>
<dbReference type="BioCyc" id="SSUI391295:GHI8-493-MONOMER"/>
<dbReference type="GO" id="GO:0000287">
    <property type="term" value="F:magnesium ion binding"/>
    <property type="evidence" value="ECO:0007669"/>
    <property type="project" value="UniProtKB-UniRule"/>
</dbReference>
<dbReference type="GO" id="GO:0017110">
    <property type="term" value="F:nucleoside diphosphate phosphatase activity"/>
    <property type="evidence" value="ECO:0007669"/>
    <property type="project" value="UniProtKB-UniRule"/>
</dbReference>
<dbReference type="GO" id="GO:0017111">
    <property type="term" value="F:ribonucleoside triphosphate phosphatase activity"/>
    <property type="evidence" value="ECO:0007669"/>
    <property type="project" value="UniProtKB-UniRule"/>
</dbReference>
<dbReference type="Gene3D" id="2.40.380.10">
    <property type="entry name" value="FomD-like"/>
    <property type="match status" value="1"/>
</dbReference>
<dbReference type="HAMAP" id="MF_01568">
    <property type="entry name" value="Ntdp"/>
    <property type="match status" value="1"/>
</dbReference>
<dbReference type="InterPro" id="IPR007295">
    <property type="entry name" value="DUF402"/>
</dbReference>
<dbReference type="InterPro" id="IPR035930">
    <property type="entry name" value="FomD-like_sf"/>
</dbReference>
<dbReference type="InterPro" id="IPR050212">
    <property type="entry name" value="Ntdp-like"/>
</dbReference>
<dbReference type="InterPro" id="IPR016882">
    <property type="entry name" value="SA1684"/>
</dbReference>
<dbReference type="NCBIfam" id="NF010183">
    <property type="entry name" value="PRK13662.1"/>
    <property type="match status" value="1"/>
</dbReference>
<dbReference type="PANTHER" id="PTHR39159">
    <property type="match status" value="1"/>
</dbReference>
<dbReference type="PANTHER" id="PTHR39159:SF1">
    <property type="entry name" value="UPF0374 PROTEIN YGAC"/>
    <property type="match status" value="1"/>
</dbReference>
<dbReference type="Pfam" id="PF04167">
    <property type="entry name" value="DUF402"/>
    <property type="match status" value="1"/>
</dbReference>
<dbReference type="PIRSF" id="PIRSF028345">
    <property type="entry name" value="UCP028345"/>
    <property type="match status" value="1"/>
</dbReference>
<dbReference type="SUPFAM" id="SSF159234">
    <property type="entry name" value="FomD-like"/>
    <property type="match status" value="1"/>
</dbReference>
<reference key="1">
    <citation type="journal article" date="2007" name="PLoS ONE">
        <title>A glimpse of streptococcal toxic shock syndrome from comparative genomics of S. suis 2 Chinese isolates.</title>
        <authorList>
            <person name="Chen C."/>
            <person name="Tang J."/>
            <person name="Dong W."/>
            <person name="Wang C."/>
            <person name="Feng Y."/>
            <person name="Wang J."/>
            <person name="Zheng F."/>
            <person name="Pan X."/>
            <person name="Liu D."/>
            <person name="Li M."/>
            <person name="Song Y."/>
            <person name="Zhu X."/>
            <person name="Sun H."/>
            <person name="Feng T."/>
            <person name="Guo Z."/>
            <person name="Ju A."/>
            <person name="Ge J."/>
            <person name="Dong Y."/>
            <person name="Sun W."/>
            <person name="Jiang Y."/>
            <person name="Wang J."/>
            <person name="Yan J."/>
            <person name="Yang H."/>
            <person name="Wang X."/>
            <person name="Gao G.F."/>
            <person name="Yang R."/>
            <person name="Wang J."/>
            <person name="Yu J."/>
        </authorList>
    </citation>
    <scope>NUCLEOTIDE SEQUENCE [LARGE SCALE GENOMIC DNA]</scope>
    <source>
        <strain>05ZYH33</strain>
    </source>
</reference>
<feature type="chain" id="PRO_1000069113" description="Nucleoside triphosphate/diphosphate phosphatase">
    <location>
        <begin position="1"/>
        <end position="177"/>
    </location>
</feature>
<feature type="active site" description="Proton donor" evidence="1">
    <location>
        <position position="23"/>
    </location>
</feature>
<feature type="binding site" evidence="1">
    <location>
        <position position="87"/>
    </location>
    <ligand>
        <name>Mg(2+)</name>
        <dbReference type="ChEBI" id="CHEBI:18420"/>
        <label>1</label>
    </ligand>
</feature>
<feature type="binding site" evidence="1">
    <location>
        <position position="103"/>
    </location>
    <ligand>
        <name>Mg(2+)</name>
        <dbReference type="ChEBI" id="CHEBI:18420"/>
        <label>1</label>
    </ligand>
</feature>
<feature type="binding site" evidence="1">
    <location>
        <position position="105"/>
    </location>
    <ligand>
        <name>Mg(2+)</name>
        <dbReference type="ChEBI" id="CHEBI:18420"/>
        <label>2</label>
    </ligand>
</feature>
<feature type="binding site" evidence="1">
    <location>
        <position position="107"/>
    </location>
    <ligand>
        <name>Mg(2+)</name>
        <dbReference type="ChEBI" id="CHEBI:18420"/>
        <label>1</label>
    </ligand>
</feature>
<feature type="binding site" evidence="1">
    <location>
        <position position="107"/>
    </location>
    <ligand>
        <name>Mg(2+)</name>
        <dbReference type="ChEBI" id="CHEBI:18420"/>
        <label>2</label>
    </ligand>
</feature>
<feature type="binding site" evidence="1">
    <location>
        <position position="120"/>
    </location>
    <ligand>
        <name>Mg(2+)</name>
        <dbReference type="ChEBI" id="CHEBI:18420"/>
        <label>2</label>
    </ligand>
</feature>
<feature type="binding site" evidence="1">
    <location>
        <position position="123"/>
    </location>
    <ligand>
        <name>Mg(2+)</name>
        <dbReference type="ChEBI" id="CHEBI:18420"/>
        <label>2</label>
    </ligand>
</feature>
<evidence type="ECO:0000255" key="1">
    <source>
        <dbReference type="HAMAP-Rule" id="MF_01568"/>
    </source>
</evidence>
<comment type="function">
    <text evidence="1">Has nucleoside phosphatase activity towards nucleoside triphosphates and nucleoside diphosphates.</text>
</comment>
<comment type="catalytic activity">
    <reaction evidence="1">
        <text>a ribonucleoside 5'-triphosphate + H2O = a ribonucleoside 5'-diphosphate + phosphate + H(+)</text>
        <dbReference type="Rhea" id="RHEA:23680"/>
        <dbReference type="ChEBI" id="CHEBI:15377"/>
        <dbReference type="ChEBI" id="CHEBI:15378"/>
        <dbReference type="ChEBI" id="CHEBI:43474"/>
        <dbReference type="ChEBI" id="CHEBI:57930"/>
        <dbReference type="ChEBI" id="CHEBI:61557"/>
        <dbReference type="EC" id="3.6.1.15"/>
    </reaction>
</comment>
<comment type="catalytic activity">
    <reaction evidence="1">
        <text>a ribonucleoside 5'-diphosphate + H2O = a ribonucleoside 5'-phosphate + phosphate + H(+)</text>
        <dbReference type="Rhea" id="RHEA:36799"/>
        <dbReference type="ChEBI" id="CHEBI:15377"/>
        <dbReference type="ChEBI" id="CHEBI:15378"/>
        <dbReference type="ChEBI" id="CHEBI:43474"/>
        <dbReference type="ChEBI" id="CHEBI:57930"/>
        <dbReference type="ChEBI" id="CHEBI:58043"/>
        <dbReference type="EC" id="3.6.1.6"/>
    </reaction>
</comment>
<comment type="cofactor">
    <cofactor evidence="1">
        <name>Mg(2+)</name>
        <dbReference type="ChEBI" id="CHEBI:18420"/>
    </cofactor>
</comment>
<comment type="similarity">
    <text evidence="1">Belongs to the Ntdp family.</text>
</comment>
<protein>
    <recommendedName>
        <fullName evidence="1">Nucleoside triphosphate/diphosphate phosphatase</fullName>
        <ecNumber evidence="1">3.6.1.15</ecNumber>
        <ecNumber evidence="1">3.6.1.6</ecNumber>
    </recommendedName>
</protein>